<gene>
    <name evidence="1" type="primary">ilvC</name>
    <name type="ordered locus">jk1298</name>
</gene>
<name>ILVC_CORJK</name>
<reference key="1">
    <citation type="journal article" date="2005" name="J. Bacteriol.">
        <title>Complete genome sequence and analysis of the multiresistant nosocomial pathogen Corynebacterium jeikeium K411, a lipid-requiring bacterium of the human skin flora.</title>
        <authorList>
            <person name="Tauch A."/>
            <person name="Kaiser O."/>
            <person name="Hain T."/>
            <person name="Goesmann A."/>
            <person name="Weisshaar B."/>
            <person name="Albersmeier A."/>
            <person name="Bekel T."/>
            <person name="Bischoff N."/>
            <person name="Brune I."/>
            <person name="Chakraborty T."/>
            <person name="Kalinowski J."/>
            <person name="Meyer F."/>
            <person name="Rupp O."/>
            <person name="Schneiker S."/>
            <person name="Viehoever P."/>
            <person name="Puehler A."/>
        </authorList>
    </citation>
    <scope>NUCLEOTIDE SEQUENCE [LARGE SCALE GENOMIC DNA]</scope>
    <source>
        <strain>K411</strain>
    </source>
</reference>
<dbReference type="EC" id="1.1.1.86" evidence="1"/>
<dbReference type="EMBL" id="CR931997">
    <property type="protein sequence ID" value="CAI37468.1"/>
    <property type="molecule type" value="Genomic_DNA"/>
</dbReference>
<dbReference type="RefSeq" id="WP_011273793.1">
    <property type="nucleotide sequence ID" value="NC_007164.1"/>
</dbReference>
<dbReference type="SMR" id="Q4JUN9"/>
<dbReference type="STRING" id="306537.jk1298"/>
<dbReference type="KEGG" id="cjk:jk1298"/>
<dbReference type="PATRIC" id="fig|306537.10.peg.1317"/>
<dbReference type="eggNOG" id="COG0059">
    <property type="taxonomic scope" value="Bacteria"/>
</dbReference>
<dbReference type="HOGENOM" id="CLU_033821_0_1_11"/>
<dbReference type="OrthoDB" id="9804088at2"/>
<dbReference type="UniPathway" id="UPA00047">
    <property type="reaction ID" value="UER00056"/>
</dbReference>
<dbReference type="UniPathway" id="UPA00049">
    <property type="reaction ID" value="UER00060"/>
</dbReference>
<dbReference type="Proteomes" id="UP000000545">
    <property type="component" value="Chromosome"/>
</dbReference>
<dbReference type="GO" id="GO:0005829">
    <property type="term" value="C:cytosol"/>
    <property type="evidence" value="ECO:0007669"/>
    <property type="project" value="TreeGrafter"/>
</dbReference>
<dbReference type="GO" id="GO:0004455">
    <property type="term" value="F:ketol-acid reductoisomerase activity"/>
    <property type="evidence" value="ECO:0007669"/>
    <property type="project" value="UniProtKB-UniRule"/>
</dbReference>
<dbReference type="GO" id="GO:0000287">
    <property type="term" value="F:magnesium ion binding"/>
    <property type="evidence" value="ECO:0007669"/>
    <property type="project" value="UniProtKB-UniRule"/>
</dbReference>
<dbReference type="GO" id="GO:0050661">
    <property type="term" value="F:NADP binding"/>
    <property type="evidence" value="ECO:0007669"/>
    <property type="project" value="InterPro"/>
</dbReference>
<dbReference type="GO" id="GO:0009097">
    <property type="term" value="P:isoleucine biosynthetic process"/>
    <property type="evidence" value="ECO:0007669"/>
    <property type="project" value="UniProtKB-UniRule"/>
</dbReference>
<dbReference type="GO" id="GO:0009099">
    <property type="term" value="P:L-valine biosynthetic process"/>
    <property type="evidence" value="ECO:0007669"/>
    <property type="project" value="UniProtKB-UniRule"/>
</dbReference>
<dbReference type="FunFam" id="3.40.50.720:FF:000023">
    <property type="entry name" value="Ketol-acid reductoisomerase (NADP(+))"/>
    <property type="match status" value="1"/>
</dbReference>
<dbReference type="Gene3D" id="6.10.240.10">
    <property type="match status" value="1"/>
</dbReference>
<dbReference type="Gene3D" id="3.40.50.720">
    <property type="entry name" value="NAD(P)-binding Rossmann-like Domain"/>
    <property type="match status" value="1"/>
</dbReference>
<dbReference type="HAMAP" id="MF_00435">
    <property type="entry name" value="IlvC"/>
    <property type="match status" value="1"/>
</dbReference>
<dbReference type="InterPro" id="IPR008927">
    <property type="entry name" value="6-PGluconate_DH-like_C_sf"/>
</dbReference>
<dbReference type="InterPro" id="IPR013023">
    <property type="entry name" value="KARI"/>
</dbReference>
<dbReference type="InterPro" id="IPR000506">
    <property type="entry name" value="KARI_C"/>
</dbReference>
<dbReference type="InterPro" id="IPR013116">
    <property type="entry name" value="KARI_N"/>
</dbReference>
<dbReference type="InterPro" id="IPR014359">
    <property type="entry name" value="KARI_prok"/>
</dbReference>
<dbReference type="InterPro" id="IPR036291">
    <property type="entry name" value="NAD(P)-bd_dom_sf"/>
</dbReference>
<dbReference type="NCBIfam" id="TIGR00465">
    <property type="entry name" value="ilvC"/>
    <property type="match status" value="1"/>
</dbReference>
<dbReference type="NCBIfam" id="NF004017">
    <property type="entry name" value="PRK05479.1"/>
    <property type="match status" value="1"/>
</dbReference>
<dbReference type="NCBIfam" id="NF009940">
    <property type="entry name" value="PRK13403.1"/>
    <property type="match status" value="1"/>
</dbReference>
<dbReference type="PANTHER" id="PTHR21371">
    <property type="entry name" value="KETOL-ACID REDUCTOISOMERASE, MITOCHONDRIAL"/>
    <property type="match status" value="1"/>
</dbReference>
<dbReference type="PANTHER" id="PTHR21371:SF1">
    <property type="entry name" value="KETOL-ACID REDUCTOISOMERASE, MITOCHONDRIAL"/>
    <property type="match status" value="1"/>
</dbReference>
<dbReference type="Pfam" id="PF01450">
    <property type="entry name" value="KARI_C"/>
    <property type="match status" value="1"/>
</dbReference>
<dbReference type="Pfam" id="PF07991">
    <property type="entry name" value="KARI_N"/>
    <property type="match status" value="1"/>
</dbReference>
<dbReference type="PIRSF" id="PIRSF000116">
    <property type="entry name" value="IlvC_gammaproteo"/>
    <property type="match status" value="1"/>
</dbReference>
<dbReference type="SUPFAM" id="SSF48179">
    <property type="entry name" value="6-phosphogluconate dehydrogenase C-terminal domain-like"/>
    <property type="match status" value="1"/>
</dbReference>
<dbReference type="SUPFAM" id="SSF51735">
    <property type="entry name" value="NAD(P)-binding Rossmann-fold domains"/>
    <property type="match status" value="1"/>
</dbReference>
<dbReference type="PROSITE" id="PS51851">
    <property type="entry name" value="KARI_C"/>
    <property type="match status" value="1"/>
</dbReference>
<dbReference type="PROSITE" id="PS51850">
    <property type="entry name" value="KARI_N"/>
    <property type="match status" value="1"/>
</dbReference>
<proteinExistence type="inferred from homology"/>
<organism>
    <name type="scientific">Corynebacterium jeikeium (strain K411)</name>
    <dbReference type="NCBI Taxonomy" id="306537"/>
    <lineage>
        <taxon>Bacteria</taxon>
        <taxon>Bacillati</taxon>
        <taxon>Actinomycetota</taxon>
        <taxon>Actinomycetes</taxon>
        <taxon>Mycobacteriales</taxon>
        <taxon>Corynebacteriaceae</taxon>
        <taxon>Corynebacterium</taxon>
    </lineage>
</organism>
<sequence>MAIDVFYDDDADLSIIQGRKVAIIGYGSQGHAHAQNLRESGVEVVIGLREGSKSRAKAEEAGFTVKTNAEAAEWADVIMLLAPDTSQAKIFAEDIEPNLNDGDALFFGHGLNIHFKLIEPADNIIIGMVAPKGPGHLVRRQFVDGKGVPCLIAVEQDPKNNGRDLALSYAAAIGGARAGVIPTTFEAETVTDLFGEQAVLCGGTEELIKTGFEVLVEAGYEPEMAYFECLHEMKLIVDLMFEGGIANMNYSVSDTAEFGGYLSGPRVIDADTKKRMKDILTDIQDGTFTKRLVANVEGGNKELEELRASYNDHQIEKTGAKLRDLMSWVKVDARAETA</sequence>
<accession>Q4JUN9</accession>
<evidence type="ECO:0000255" key="1">
    <source>
        <dbReference type="HAMAP-Rule" id="MF_00435"/>
    </source>
</evidence>
<evidence type="ECO:0000255" key="2">
    <source>
        <dbReference type="PROSITE-ProRule" id="PRU01197"/>
    </source>
</evidence>
<evidence type="ECO:0000255" key="3">
    <source>
        <dbReference type="PROSITE-ProRule" id="PRU01198"/>
    </source>
</evidence>
<keyword id="KW-0028">Amino-acid biosynthesis</keyword>
<keyword id="KW-0100">Branched-chain amino acid biosynthesis</keyword>
<keyword id="KW-0460">Magnesium</keyword>
<keyword id="KW-0479">Metal-binding</keyword>
<keyword id="KW-0521">NADP</keyword>
<keyword id="KW-0560">Oxidoreductase</keyword>
<keyword id="KW-1185">Reference proteome</keyword>
<protein>
    <recommendedName>
        <fullName evidence="1">Ketol-acid reductoisomerase (NADP(+))</fullName>
        <shortName evidence="1">KARI</shortName>
        <ecNumber evidence="1">1.1.1.86</ecNumber>
    </recommendedName>
    <alternativeName>
        <fullName evidence="1">Acetohydroxy-acid isomeroreductase</fullName>
        <shortName evidence="1">AHIR</shortName>
    </alternativeName>
    <alternativeName>
        <fullName evidence="1">Alpha-keto-beta-hydroxylacyl reductoisomerase</fullName>
    </alternativeName>
    <alternativeName>
        <fullName evidence="1">Ketol-acid reductoisomerase type 1</fullName>
    </alternativeName>
    <alternativeName>
        <fullName evidence="1">Ketol-acid reductoisomerase type I</fullName>
    </alternativeName>
</protein>
<feature type="chain" id="PRO_0000226172" description="Ketol-acid reductoisomerase (NADP(+))">
    <location>
        <begin position="1"/>
        <end position="338"/>
    </location>
</feature>
<feature type="domain" description="KARI N-terminal Rossmann" evidence="2">
    <location>
        <begin position="3"/>
        <end position="183"/>
    </location>
</feature>
<feature type="domain" description="KARI C-terminal knotted" evidence="3">
    <location>
        <begin position="184"/>
        <end position="329"/>
    </location>
</feature>
<feature type="active site" evidence="1">
    <location>
        <position position="109"/>
    </location>
</feature>
<feature type="binding site" evidence="1">
    <location>
        <begin position="26"/>
        <end position="29"/>
    </location>
    <ligand>
        <name>NADP(+)</name>
        <dbReference type="ChEBI" id="CHEBI:58349"/>
    </ligand>
</feature>
<feature type="binding site" evidence="1">
    <location>
        <position position="49"/>
    </location>
    <ligand>
        <name>NADP(+)</name>
        <dbReference type="ChEBI" id="CHEBI:58349"/>
    </ligand>
</feature>
<feature type="binding site" evidence="1">
    <location>
        <position position="52"/>
    </location>
    <ligand>
        <name>NADP(+)</name>
        <dbReference type="ChEBI" id="CHEBI:58349"/>
    </ligand>
</feature>
<feature type="binding site" evidence="1">
    <location>
        <position position="54"/>
    </location>
    <ligand>
        <name>NADP(+)</name>
        <dbReference type="ChEBI" id="CHEBI:58349"/>
    </ligand>
</feature>
<feature type="binding site" evidence="1">
    <location>
        <begin position="84"/>
        <end position="87"/>
    </location>
    <ligand>
        <name>NADP(+)</name>
        <dbReference type="ChEBI" id="CHEBI:58349"/>
    </ligand>
</feature>
<feature type="binding site" evidence="1">
    <location>
        <position position="135"/>
    </location>
    <ligand>
        <name>NADP(+)</name>
        <dbReference type="ChEBI" id="CHEBI:58349"/>
    </ligand>
</feature>
<feature type="binding site" evidence="1">
    <location>
        <position position="192"/>
    </location>
    <ligand>
        <name>Mg(2+)</name>
        <dbReference type="ChEBI" id="CHEBI:18420"/>
        <label>1</label>
    </ligand>
</feature>
<feature type="binding site" evidence="1">
    <location>
        <position position="192"/>
    </location>
    <ligand>
        <name>Mg(2+)</name>
        <dbReference type="ChEBI" id="CHEBI:18420"/>
        <label>2</label>
    </ligand>
</feature>
<feature type="binding site" evidence="1">
    <location>
        <position position="196"/>
    </location>
    <ligand>
        <name>Mg(2+)</name>
        <dbReference type="ChEBI" id="CHEBI:18420"/>
        <label>1</label>
    </ligand>
</feature>
<feature type="binding site" evidence="1">
    <location>
        <position position="228"/>
    </location>
    <ligand>
        <name>Mg(2+)</name>
        <dbReference type="ChEBI" id="CHEBI:18420"/>
        <label>2</label>
    </ligand>
</feature>
<feature type="binding site" evidence="1">
    <location>
        <position position="232"/>
    </location>
    <ligand>
        <name>Mg(2+)</name>
        <dbReference type="ChEBI" id="CHEBI:18420"/>
        <label>2</label>
    </ligand>
</feature>
<feature type="binding site" evidence="1">
    <location>
        <position position="253"/>
    </location>
    <ligand>
        <name>substrate</name>
    </ligand>
</feature>
<comment type="function">
    <text evidence="1">Involved in the biosynthesis of branched-chain amino acids (BCAA). Catalyzes an alkyl-migration followed by a ketol-acid reduction of (S)-2-acetolactate (S2AL) to yield (R)-2,3-dihydroxy-isovalerate. In the isomerase reaction, S2AL is rearranged via a Mg-dependent methyl migration to produce 3-hydroxy-3-methyl-2-ketobutyrate (HMKB). In the reductase reaction, this 2-ketoacid undergoes a metal-dependent reduction by NADPH to yield (R)-2,3-dihydroxy-isovalerate.</text>
</comment>
<comment type="catalytic activity">
    <reaction evidence="1">
        <text>(2R)-2,3-dihydroxy-3-methylbutanoate + NADP(+) = (2S)-2-acetolactate + NADPH + H(+)</text>
        <dbReference type="Rhea" id="RHEA:22068"/>
        <dbReference type="ChEBI" id="CHEBI:15378"/>
        <dbReference type="ChEBI" id="CHEBI:49072"/>
        <dbReference type="ChEBI" id="CHEBI:57783"/>
        <dbReference type="ChEBI" id="CHEBI:58349"/>
        <dbReference type="ChEBI" id="CHEBI:58476"/>
        <dbReference type="EC" id="1.1.1.86"/>
    </reaction>
</comment>
<comment type="catalytic activity">
    <reaction evidence="1">
        <text>(2R,3R)-2,3-dihydroxy-3-methylpentanoate + NADP(+) = (S)-2-ethyl-2-hydroxy-3-oxobutanoate + NADPH + H(+)</text>
        <dbReference type="Rhea" id="RHEA:13493"/>
        <dbReference type="ChEBI" id="CHEBI:15378"/>
        <dbReference type="ChEBI" id="CHEBI:49256"/>
        <dbReference type="ChEBI" id="CHEBI:49258"/>
        <dbReference type="ChEBI" id="CHEBI:57783"/>
        <dbReference type="ChEBI" id="CHEBI:58349"/>
        <dbReference type="EC" id="1.1.1.86"/>
    </reaction>
</comment>
<comment type="cofactor">
    <cofactor evidence="1">
        <name>Mg(2+)</name>
        <dbReference type="ChEBI" id="CHEBI:18420"/>
    </cofactor>
    <text evidence="1">Binds 2 magnesium ions per subunit.</text>
</comment>
<comment type="pathway">
    <text evidence="1">Amino-acid biosynthesis; L-isoleucine biosynthesis; L-isoleucine from 2-oxobutanoate: step 2/4.</text>
</comment>
<comment type="pathway">
    <text evidence="1">Amino-acid biosynthesis; L-valine biosynthesis; L-valine from pyruvate: step 2/4.</text>
</comment>
<comment type="similarity">
    <text evidence="1">Belongs to the ketol-acid reductoisomerase family.</text>
</comment>